<sequence length="307" mass="34596">MTDSTYDVNRVRAYLQGLQMRIADALGAFDGTPLAADTWRRGPGERLRGGGCTRILEAGGFFERAGIGFSDVAGDALPPSANASRPQLAGRGFEALGVSLVLHPRNPYCPTVHMNVRMLIATKPGEAPVFWFGGGMDLTPIYGFEEDARHFHRTCRAALEPFGAELYPRFKKWCDDYFFLKHRNEARGIGGIFFDDFSELGFERSFEMLQSVGDAFLPSYLPIVERRRDTPYGERERAFQAYRRGRYVEFNLVFDRGTLFGLQSGGRTESILLSMPPTAGWRYDWHPDPGTPEARLQSEFLVPRDWA</sequence>
<dbReference type="EC" id="1.3.3.3" evidence="1"/>
<dbReference type="EMBL" id="CP000010">
    <property type="protein sequence ID" value="AAU49453.1"/>
    <property type="molecule type" value="Genomic_DNA"/>
</dbReference>
<dbReference type="RefSeq" id="WP_004185493.1">
    <property type="nucleotide sequence ID" value="NC_006348.1"/>
</dbReference>
<dbReference type="RefSeq" id="YP_103482.1">
    <property type="nucleotide sequence ID" value="NC_006348.1"/>
</dbReference>
<dbReference type="SMR" id="Q62II8"/>
<dbReference type="GeneID" id="92979597"/>
<dbReference type="KEGG" id="bma:BMA1886"/>
<dbReference type="PATRIC" id="fig|243160.12.peg.1928"/>
<dbReference type="eggNOG" id="COG0408">
    <property type="taxonomic scope" value="Bacteria"/>
</dbReference>
<dbReference type="HOGENOM" id="CLU_026169_0_1_4"/>
<dbReference type="UniPathway" id="UPA00251">
    <property type="reaction ID" value="UER00322"/>
</dbReference>
<dbReference type="Proteomes" id="UP000006693">
    <property type="component" value="Chromosome 1"/>
</dbReference>
<dbReference type="GO" id="GO:0005737">
    <property type="term" value="C:cytoplasm"/>
    <property type="evidence" value="ECO:0007669"/>
    <property type="project" value="UniProtKB-SubCell"/>
</dbReference>
<dbReference type="GO" id="GO:0004109">
    <property type="term" value="F:coproporphyrinogen oxidase activity"/>
    <property type="evidence" value="ECO:0007669"/>
    <property type="project" value="UniProtKB-UniRule"/>
</dbReference>
<dbReference type="GO" id="GO:0046872">
    <property type="term" value="F:metal ion binding"/>
    <property type="evidence" value="ECO:0007669"/>
    <property type="project" value="UniProtKB-KW"/>
</dbReference>
<dbReference type="GO" id="GO:0042803">
    <property type="term" value="F:protein homodimerization activity"/>
    <property type="evidence" value="ECO:0000250"/>
    <property type="project" value="UniProtKB"/>
</dbReference>
<dbReference type="GO" id="GO:0006782">
    <property type="term" value="P:protoporphyrinogen IX biosynthetic process"/>
    <property type="evidence" value="ECO:0007669"/>
    <property type="project" value="UniProtKB-UniRule"/>
</dbReference>
<dbReference type="FunFam" id="3.40.1500.10:FF:000001">
    <property type="entry name" value="Oxygen-dependent coproporphyrinogen-III oxidase"/>
    <property type="match status" value="1"/>
</dbReference>
<dbReference type="Gene3D" id="3.40.1500.10">
    <property type="entry name" value="Coproporphyrinogen III oxidase, aerobic"/>
    <property type="match status" value="1"/>
</dbReference>
<dbReference type="HAMAP" id="MF_00333">
    <property type="entry name" value="Coprogen_oxidas"/>
    <property type="match status" value="1"/>
</dbReference>
<dbReference type="InterPro" id="IPR001260">
    <property type="entry name" value="Coprogen_oxidase_aer"/>
</dbReference>
<dbReference type="InterPro" id="IPR036406">
    <property type="entry name" value="Coprogen_oxidase_aer_sf"/>
</dbReference>
<dbReference type="InterPro" id="IPR018375">
    <property type="entry name" value="Coprogen_oxidase_CS"/>
</dbReference>
<dbReference type="NCBIfam" id="NF003727">
    <property type="entry name" value="PRK05330.1"/>
    <property type="match status" value="1"/>
</dbReference>
<dbReference type="PANTHER" id="PTHR10755">
    <property type="entry name" value="COPROPORPHYRINOGEN III OXIDASE, MITOCHONDRIAL"/>
    <property type="match status" value="1"/>
</dbReference>
<dbReference type="PANTHER" id="PTHR10755:SF0">
    <property type="entry name" value="OXYGEN-DEPENDENT COPROPORPHYRINOGEN-III OXIDASE, MITOCHONDRIAL"/>
    <property type="match status" value="1"/>
</dbReference>
<dbReference type="Pfam" id="PF01218">
    <property type="entry name" value="Coprogen_oxidas"/>
    <property type="match status" value="1"/>
</dbReference>
<dbReference type="PIRSF" id="PIRSF000166">
    <property type="entry name" value="Coproporphyri_ox"/>
    <property type="match status" value="1"/>
</dbReference>
<dbReference type="PRINTS" id="PR00073">
    <property type="entry name" value="COPRGNOXDASE"/>
</dbReference>
<dbReference type="SUPFAM" id="SSF102886">
    <property type="entry name" value="Coproporphyrinogen III oxidase"/>
    <property type="match status" value="1"/>
</dbReference>
<dbReference type="PROSITE" id="PS01021">
    <property type="entry name" value="COPROGEN_OXIDASE"/>
    <property type="match status" value="1"/>
</dbReference>
<comment type="function">
    <text evidence="1">Involved in the heme biosynthesis. Catalyzes the aerobic oxidative decarboxylation of propionate groups of rings A and B of coproporphyrinogen-III to yield the vinyl groups in protoporphyrinogen-IX.</text>
</comment>
<comment type="catalytic activity">
    <reaction evidence="1">
        <text>coproporphyrinogen III + O2 + 2 H(+) = protoporphyrinogen IX + 2 CO2 + 2 H2O</text>
        <dbReference type="Rhea" id="RHEA:18257"/>
        <dbReference type="ChEBI" id="CHEBI:15377"/>
        <dbReference type="ChEBI" id="CHEBI:15378"/>
        <dbReference type="ChEBI" id="CHEBI:15379"/>
        <dbReference type="ChEBI" id="CHEBI:16526"/>
        <dbReference type="ChEBI" id="CHEBI:57307"/>
        <dbReference type="ChEBI" id="CHEBI:57309"/>
        <dbReference type="EC" id="1.3.3.3"/>
    </reaction>
</comment>
<comment type="cofactor">
    <cofactor evidence="1">
        <name>a divalent metal cation</name>
        <dbReference type="ChEBI" id="CHEBI:60240"/>
    </cofactor>
</comment>
<comment type="pathway">
    <text evidence="1">Porphyrin-containing compound metabolism; protoporphyrin-IX biosynthesis; protoporphyrinogen-IX from coproporphyrinogen-III (O2 route): step 1/1.</text>
</comment>
<comment type="subunit">
    <text evidence="1">Homodimer.</text>
</comment>
<comment type="subcellular location">
    <subcellularLocation>
        <location evidence="1">Cytoplasm</location>
    </subcellularLocation>
</comment>
<comment type="similarity">
    <text evidence="1">Belongs to the aerobic coproporphyrinogen-III oxidase family.</text>
</comment>
<evidence type="ECO:0000255" key="1">
    <source>
        <dbReference type="HAMAP-Rule" id="MF_00333"/>
    </source>
</evidence>
<protein>
    <recommendedName>
        <fullName evidence="1">Oxygen-dependent coproporphyrinogen-III oxidase</fullName>
        <shortName evidence="1">CPO</shortName>
        <shortName evidence="1">Coprogen oxidase</shortName>
        <shortName evidence="1">Coproporphyrinogenase</shortName>
        <ecNumber evidence="1">1.3.3.3</ecNumber>
    </recommendedName>
</protein>
<gene>
    <name evidence="1" type="primary">hemF</name>
    <name type="ordered locus">BMA1886</name>
</gene>
<accession>Q62II8</accession>
<name>HEM6_BURMA</name>
<feature type="chain" id="PRO_0000109889" description="Oxygen-dependent coproporphyrinogen-III oxidase">
    <location>
        <begin position="1"/>
        <end position="307"/>
    </location>
</feature>
<feature type="region of interest" description="Important for dimerization" evidence="1">
    <location>
        <begin position="247"/>
        <end position="282"/>
    </location>
</feature>
<feature type="active site" description="Proton donor" evidence="1">
    <location>
        <position position="113"/>
    </location>
</feature>
<feature type="binding site" evidence="1">
    <location>
        <position position="99"/>
    </location>
    <ligand>
        <name>substrate</name>
    </ligand>
</feature>
<feature type="binding site" evidence="1">
    <location>
        <position position="103"/>
    </location>
    <ligand>
        <name>a divalent metal cation</name>
        <dbReference type="ChEBI" id="CHEBI:60240"/>
    </ligand>
</feature>
<feature type="binding site" evidence="1">
    <location>
        <position position="113"/>
    </location>
    <ligand>
        <name>a divalent metal cation</name>
        <dbReference type="ChEBI" id="CHEBI:60240"/>
    </ligand>
</feature>
<feature type="binding site" evidence="1">
    <location>
        <begin position="115"/>
        <end position="117"/>
    </location>
    <ligand>
        <name>substrate</name>
    </ligand>
</feature>
<feature type="binding site" evidence="1">
    <location>
        <position position="152"/>
    </location>
    <ligand>
        <name>a divalent metal cation</name>
        <dbReference type="ChEBI" id="CHEBI:60240"/>
    </ligand>
</feature>
<feature type="binding site" evidence="1">
    <location>
        <position position="182"/>
    </location>
    <ligand>
        <name>a divalent metal cation</name>
        <dbReference type="ChEBI" id="CHEBI:60240"/>
    </ligand>
</feature>
<feature type="binding site" evidence="1">
    <location>
        <begin position="265"/>
        <end position="267"/>
    </location>
    <ligand>
        <name>substrate</name>
    </ligand>
</feature>
<feature type="site" description="Important for dimerization" evidence="1">
    <location>
        <position position="182"/>
    </location>
</feature>
<proteinExistence type="inferred from homology"/>
<keyword id="KW-0963">Cytoplasm</keyword>
<keyword id="KW-0350">Heme biosynthesis</keyword>
<keyword id="KW-0479">Metal-binding</keyword>
<keyword id="KW-0560">Oxidoreductase</keyword>
<keyword id="KW-0627">Porphyrin biosynthesis</keyword>
<keyword id="KW-1185">Reference proteome</keyword>
<organism>
    <name type="scientific">Burkholderia mallei (strain ATCC 23344)</name>
    <dbReference type="NCBI Taxonomy" id="243160"/>
    <lineage>
        <taxon>Bacteria</taxon>
        <taxon>Pseudomonadati</taxon>
        <taxon>Pseudomonadota</taxon>
        <taxon>Betaproteobacteria</taxon>
        <taxon>Burkholderiales</taxon>
        <taxon>Burkholderiaceae</taxon>
        <taxon>Burkholderia</taxon>
        <taxon>pseudomallei group</taxon>
    </lineage>
</organism>
<reference key="1">
    <citation type="journal article" date="2004" name="Proc. Natl. Acad. Sci. U.S.A.">
        <title>Structural flexibility in the Burkholderia mallei genome.</title>
        <authorList>
            <person name="Nierman W.C."/>
            <person name="DeShazer D."/>
            <person name="Kim H.S."/>
            <person name="Tettelin H."/>
            <person name="Nelson K.E."/>
            <person name="Feldblyum T.V."/>
            <person name="Ulrich R.L."/>
            <person name="Ronning C.M."/>
            <person name="Brinkac L.M."/>
            <person name="Daugherty S.C."/>
            <person name="Davidsen T.D."/>
            <person name="DeBoy R.T."/>
            <person name="Dimitrov G."/>
            <person name="Dodson R.J."/>
            <person name="Durkin A.S."/>
            <person name="Gwinn M.L."/>
            <person name="Haft D.H."/>
            <person name="Khouri H.M."/>
            <person name="Kolonay J.F."/>
            <person name="Madupu R."/>
            <person name="Mohammoud Y."/>
            <person name="Nelson W.C."/>
            <person name="Radune D."/>
            <person name="Romero C.M."/>
            <person name="Sarria S."/>
            <person name="Selengut J."/>
            <person name="Shamblin C."/>
            <person name="Sullivan S.A."/>
            <person name="White O."/>
            <person name="Yu Y."/>
            <person name="Zafar N."/>
            <person name="Zhou L."/>
            <person name="Fraser C.M."/>
        </authorList>
    </citation>
    <scope>NUCLEOTIDE SEQUENCE [LARGE SCALE GENOMIC DNA]</scope>
    <source>
        <strain>ATCC 23344</strain>
    </source>
</reference>